<evidence type="ECO:0000250" key="1"/>
<evidence type="ECO:0000250" key="2">
    <source>
        <dbReference type="UniProtKB" id="Q8WVI7"/>
    </source>
</evidence>
<evidence type="ECO:0000256" key="3">
    <source>
        <dbReference type="SAM" id="MobiDB-lite"/>
    </source>
</evidence>
<evidence type="ECO:0000305" key="4"/>
<gene>
    <name type="primary">PPP1R1C</name>
</gene>
<dbReference type="EMBL" id="CR859901">
    <property type="protein sequence ID" value="CAH92057.1"/>
    <property type="molecule type" value="mRNA"/>
</dbReference>
<dbReference type="RefSeq" id="NP_001126196.1">
    <property type="nucleotide sequence ID" value="NM_001132724.1"/>
</dbReference>
<dbReference type="RefSeq" id="XP_009236160.2">
    <property type="nucleotide sequence ID" value="XM_009237885.4"/>
</dbReference>
<dbReference type="FunCoup" id="Q5R853">
    <property type="interactions" value="536"/>
</dbReference>
<dbReference type="GeneID" id="100173163"/>
<dbReference type="KEGG" id="pon:100173163"/>
<dbReference type="CTD" id="151242"/>
<dbReference type="eggNOG" id="ENOG502S35G">
    <property type="taxonomic scope" value="Eukaryota"/>
</dbReference>
<dbReference type="InParanoid" id="Q5R853"/>
<dbReference type="OrthoDB" id="9940275at2759"/>
<dbReference type="Proteomes" id="UP000001595">
    <property type="component" value="Unplaced"/>
</dbReference>
<dbReference type="GO" id="GO:0005737">
    <property type="term" value="C:cytoplasm"/>
    <property type="evidence" value="ECO:0007669"/>
    <property type="project" value="UniProtKB-SubCell"/>
</dbReference>
<dbReference type="GO" id="GO:0004864">
    <property type="term" value="F:protein phosphatase inhibitor activity"/>
    <property type="evidence" value="ECO:0007669"/>
    <property type="project" value="UniProtKB-KW"/>
</dbReference>
<dbReference type="GO" id="GO:0051301">
    <property type="term" value="P:cell division"/>
    <property type="evidence" value="ECO:0007669"/>
    <property type="project" value="UniProtKB-KW"/>
</dbReference>
<dbReference type="GO" id="GO:0035556">
    <property type="term" value="P:intracellular signal transduction"/>
    <property type="evidence" value="ECO:0007669"/>
    <property type="project" value="TreeGrafter"/>
</dbReference>
<dbReference type="InterPro" id="IPR008466">
    <property type="entry name" value="PPP1R1A/B/C"/>
</dbReference>
<dbReference type="PANTHER" id="PTHR15417:SF5">
    <property type="entry name" value="PROTEIN PHOSPHATASE 1 REGULATORY SUBUNIT 1C"/>
    <property type="match status" value="1"/>
</dbReference>
<dbReference type="PANTHER" id="PTHR15417">
    <property type="entry name" value="PROTEIN PHOSPHATASE INHIBITOR AND DOPAMINE- AND CAMP-REGULATED NEURONAL PHOSPHOPROTEIN"/>
    <property type="match status" value="1"/>
</dbReference>
<dbReference type="Pfam" id="PF05395">
    <property type="entry name" value="DARPP-32"/>
    <property type="match status" value="1"/>
</dbReference>
<proteinExistence type="inferred from homology"/>
<protein>
    <recommendedName>
        <fullName>Protein phosphatase 1 regulatory subunit 1C</fullName>
    </recommendedName>
</protein>
<feature type="chain" id="PRO_0000286445" description="Protein phosphatase 1 regulatory subunit 1C">
    <location>
        <begin position="1"/>
        <end position="109"/>
    </location>
</feature>
<feature type="region of interest" description="Disordered" evidence="3">
    <location>
        <begin position="25"/>
        <end position="109"/>
    </location>
</feature>
<feature type="compositionally biased region" description="Basic and acidic residues" evidence="3">
    <location>
        <begin position="45"/>
        <end position="54"/>
    </location>
</feature>
<feature type="compositionally biased region" description="Polar residues" evidence="3">
    <location>
        <begin position="55"/>
        <end position="75"/>
    </location>
</feature>
<feature type="compositionally biased region" description="Basic and acidic residues" evidence="3">
    <location>
        <begin position="100"/>
        <end position="109"/>
    </location>
</feature>
<sequence>MEPNSPKKIQFAVPVFQSQIAPEAAEQIRKRRPTPASLVILNEHNPPEIDDKRVPNTQGELQNASPKQRKQSVYTPPTIKGVKHLKGQNESAFPEEEEGTNEREEQRDH</sequence>
<accession>Q5R853</accession>
<reference key="1">
    <citation type="submission" date="2004-11" db="EMBL/GenBank/DDBJ databases">
        <authorList>
            <consortium name="The German cDNA consortium"/>
        </authorList>
    </citation>
    <scope>NUCLEOTIDE SEQUENCE [LARGE SCALE MRNA]</scope>
    <source>
        <tissue>Heart</tissue>
    </source>
</reference>
<keyword id="KW-0131">Cell cycle</keyword>
<keyword id="KW-0132">Cell division</keyword>
<keyword id="KW-0963">Cytoplasm</keyword>
<keyword id="KW-0650">Protein phosphatase inhibitor</keyword>
<keyword id="KW-1185">Reference proteome</keyword>
<name>PPR1C_PONAB</name>
<comment type="function">
    <text evidence="2">May increase cell susceptibility to TNF-induced apoptosis.</text>
</comment>
<comment type="subcellular location">
    <subcellularLocation>
        <location evidence="1">Cytoplasm</location>
    </subcellularLocation>
</comment>
<comment type="similarity">
    <text evidence="4">Belongs to the protein phosphatase inhibitor 1 family.</text>
</comment>
<organism>
    <name type="scientific">Pongo abelii</name>
    <name type="common">Sumatran orangutan</name>
    <name type="synonym">Pongo pygmaeus abelii</name>
    <dbReference type="NCBI Taxonomy" id="9601"/>
    <lineage>
        <taxon>Eukaryota</taxon>
        <taxon>Metazoa</taxon>
        <taxon>Chordata</taxon>
        <taxon>Craniata</taxon>
        <taxon>Vertebrata</taxon>
        <taxon>Euteleostomi</taxon>
        <taxon>Mammalia</taxon>
        <taxon>Eutheria</taxon>
        <taxon>Euarchontoglires</taxon>
        <taxon>Primates</taxon>
        <taxon>Haplorrhini</taxon>
        <taxon>Catarrhini</taxon>
        <taxon>Hominidae</taxon>
        <taxon>Pongo</taxon>
    </lineage>
</organism>